<sequence>MPHMLYTEIPTQRPVTPLLDAIDHPQQLRQLEHSQLLQVADELRQYILYAAGQSGGHFGANLGVVELTVALHYCFNTPNDRLVWDVGHQAYPHKILTGRREQITTIRAKNGLAAFPAREESVFDTFGVGHSSTAISAGLGMSLARRYQKDPCEVVCIVGDGAMTAGMAFEAMNDAVAHDADLIVVLNDNDMSISCSTGGFAKHLAAIWEKGHLVNVNEHGEAYIQPHPKWTYNSRLHQSATDAADNLFKAIGFDYFGPFDGHDVTQLVQVFNALKKRKGPRLVHVYTKKGKGFAPAEADPITYHAIGKINAASGGKTPPKYSDVFGEWLCDEAAQDERLLAITPAMCEGSGMVKFAKQFPQRFFDVAIAEQHAVTLAAGMACEGLKPVVAIYSTFLQRGYDQLIHDVALQNLDVTFGIDRAGLVGEDGPTHAGAYDYAYMRTVPNMVIMAPKDENECRQMLHTAYAYNGPAAVRYPRGAGVGVEIQKEMTVLELGKAEIVAEIKANSDEQITVLAFGSRVMVALEAAEQFAQKHDVSVCIVNMRFVKPLDEQMIRDLAEHTHLFVTVEEHAIMGGAGSAVNEFMAQEQIVKPIINLGLPDSFLHQATHNQMLQDCGLDAKGILNSIERAWLKVNQVV</sequence>
<keyword id="KW-0414">Isoprene biosynthesis</keyword>
<keyword id="KW-0460">Magnesium</keyword>
<keyword id="KW-0479">Metal-binding</keyword>
<keyword id="KW-0784">Thiamine biosynthesis</keyword>
<keyword id="KW-0786">Thiamine pyrophosphate</keyword>
<keyword id="KW-0808">Transferase</keyword>
<feature type="chain" id="PRO_1000115714" description="1-deoxy-D-xylulose-5-phosphate synthase">
    <location>
        <begin position="1"/>
        <end position="637"/>
    </location>
</feature>
<feature type="binding site" evidence="1">
    <location>
        <position position="88"/>
    </location>
    <ligand>
        <name>thiamine diphosphate</name>
        <dbReference type="ChEBI" id="CHEBI:58937"/>
    </ligand>
</feature>
<feature type="binding site" evidence="1">
    <location>
        <begin position="129"/>
        <end position="131"/>
    </location>
    <ligand>
        <name>thiamine diphosphate</name>
        <dbReference type="ChEBI" id="CHEBI:58937"/>
    </ligand>
</feature>
<feature type="binding site" evidence="1">
    <location>
        <position position="160"/>
    </location>
    <ligand>
        <name>Mg(2+)</name>
        <dbReference type="ChEBI" id="CHEBI:18420"/>
    </ligand>
</feature>
<feature type="binding site" evidence="1">
    <location>
        <begin position="161"/>
        <end position="162"/>
    </location>
    <ligand>
        <name>thiamine diphosphate</name>
        <dbReference type="ChEBI" id="CHEBI:58937"/>
    </ligand>
</feature>
<feature type="binding site" evidence="1">
    <location>
        <position position="189"/>
    </location>
    <ligand>
        <name>Mg(2+)</name>
        <dbReference type="ChEBI" id="CHEBI:18420"/>
    </ligand>
</feature>
<feature type="binding site" evidence="1">
    <location>
        <position position="189"/>
    </location>
    <ligand>
        <name>thiamine diphosphate</name>
        <dbReference type="ChEBI" id="CHEBI:58937"/>
    </ligand>
</feature>
<feature type="binding site" evidence="1">
    <location>
        <position position="293"/>
    </location>
    <ligand>
        <name>thiamine diphosphate</name>
        <dbReference type="ChEBI" id="CHEBI:58937"/>
    </ligand>
</feature>
<feature type="binding site" evidence="1">
    <location>
        <position position="370"/>
    </location>
    <ligand>
        <name>thiamine diphosphate</name>
        <dbReference type="ChEBI" id="CHEBI:58937"/>
    </ligand>
</feature>
<accession>B0V710</accession>
<organism>
    <name type="scientific">Acinetobacter baumannii (strain AYE)</name>
    <dbReference type="NCBI Taxonomy" id="509173"/>
    <lineage>
        <taxon>Bacteria</taxon>
        <taxon>Pseudomonadati</taxon>
        <taxon>Pseudomonadota</taxon>
        <taxon>Gammaproteobacteria</taxon>
        <taxon>Moraxellales</taxon>
        <taxon>Moraxellaceae</taxon>
        <taxon>Acinetobacter</taxon>
        <taxon>Acinetobacter calcoaceticus/baumannii complex</taxon>
    </lineage>
</organism>
<proteinExistence type="inferred from homology"/>
<dbReference type="EC" id="2.2.1.7" evidence="1"/>
<dbReference type="EMBL" id="CU459141">
    <property type="protein sequence ID" value="CAM85356.1"/>
    <property type="molecule type" value="Genomic_DNA"/>
</dbReference>
<dbReference type="SMR" id="B0V710"/>
<dbReference type="EnsemblBacteria" id="CAM85356">
    <property type="protein sequence ID" value="CAM85356"/>
    <property type="gene ID" value="ABAYE0381"/>
</dbReference>
<dbReference type="KEGG" id="aby:ABAYE0381"/>
<dbReference type="HOGENOM" id="CLU_009227_1_4_6"/>
<dbReference type="UniPathway" id="UPA00064">
    <property type="reaction ID" value="UER00091"/>
</dbReference>
<dbReference type="GO" id="GO:0005829">
    <property type="term" value="C:cytosol"/>
    <property type="evidence" value="ECO:0007669"/>
    <property type="project" value="TreeGrafter"/>
</dbReference>
<dbReference type="GO" id="GO:0008661">
    <property type="term" value="F:1-deoxy-D-xylulose-5-phosphate synthase activity"/>
    <property type="evidence" value="ECO:0007669"/>
    <property type="project" value="UniProtKB-UniRule"/>
</dbReference>
<dbReference type="GO" id="GO:0000287">
    <property type="term" value="F:magnesium ion binding"/>
    <property type="evidence" value="ECO:0007669"/>
    <property type="project" value="UniProtKB-UniRule"/>
</dbReference>
<dbReference type="GO" id="GO:0030976">
    <property type="term" value="F:thiamine pyrophosphate binding"/>
    <property type="evidence" value="ECO:0007669"/>
    <property type="project" value="UniProtKB-UniRule"/>
</dbReference>
<dbReference type="GO" id="GO:0052865">
    <property type="term" value="P:1-deoxy-D-xylulose 5-phosphate biosynthetic process"/>
    <property type="evidence" value="ECO:0007669"/>
    <property type="project" value="UniProtKB-UniPathway"/>
</dbReference>
<dbReference type="GO" id="GO:0019288">
    <property type="term" value="P:isopentenyl diphosphate biosynthetic process, methylerythritol 4-phosphate pathway"/>
    <property type="evidence" value="ECO:0007669"/>
    <property type="project" value="TreeGrafter"/>
</dbReference>
<dbReference type="GO" id="GO:0016114">
    <property type="term" value="P:terpenoid biosynthetic process"/>
    <property type="evidence" value="ECO:0007669"/>
    <property type="project" value="UniProtKB-UniRule"/>
</dbReference>
<dbReference type="GO" id="GO:0009228">
    <property type="term" value="P:thiamine biosynthetic process"/>
    <property type="evidence" value="ECO:0007669"/>
    <property type="project" value="UniProtKB-UniRule"/>
</dbReference>
<dbReference type="CDD" id="cd02007">
    <property type="entry name" value="TPP_DXS"/>
    <property type="match status" value="1"/>
</dbReference>
<dbReference type="CDD" id="cd07033">
    <property type="entry name" value="TPP_PYR_DXS_TK_like"/>
    <property type="match status" value="1"/>
</dbReference>
<dbReference type="FunFam" id="3.40.50.920:FF:000002">
    <property type="entry name" value="1-deoxy-D-xylulose-5-phosphate synthase"/>
    <property type="match status" value="1"/>
</dbReference>
<dbReference type="FunFam" id="3.40.50.970:FF:000005">
    <property type="entry name" value="1-deoxy-D-xylulose-5-phosphate synthase"/>
    <property type="match status" value="1"/>
</dbReference>
<dbReference type="Gene3D" id="3.40.50.920">
    <property type="match status" value="1"/>
</dbReference>
<dbReference type="Gene3D" id="3.40.50.970">
    <property type="match status" value="2"/>
</dbReference>
<dbReference type="HAMAP" id="MF_00315">
    <property type="entry name" value="DXP_synth"/>
    <property type="match status" value="1"/>
</dbReference>
<dbReference type="InterPro" id="IPR005477">
    <property type="entry name" value="Dxylulose-5-P_synthase"/>
</dbReference>
<dbReference type="InterPro" id="IPR029061">
    <property type="entry name" value="THDP-binding"/>
</dbReference>
<dbReference type="InterPro" id="IPR009014">
    <property type="entry name" value="Transketo_C/PFOR_II"/>
</dbReference>
<dbReference type="InterPro" id="IPR005475">
    <property type="entry name" value="Transketolase-like_Pyr-bd"/>
</dbReference>
<dbReference type="InterPro" id="IPR020826">
    <property type="entry name" value="Transketolase_BS"/>
</dbReference>
<dbReference type="InterPro" id="IPR033248">
    <property type="entry name" value="Transketolase_C"/>
</dbReference>
<dbReference type="NCBIfam" id="TIGR00204">
    <property type="entry name" value="dxs"/>
    <property type="match status" value="1"/>
</dbReference>
<dbReference type="NCBIfam" id="NF003933">
    <property type="entry name" value="PRK05444.2-2"/>
    <property type="match status" value="1"/>
</dbReference>
<dbReference type="PANTHER" id="PTHR43322">
    <property type="entry name" value="1-D-DEOXYXYLULOSE 5-PHOSPHATE SYNTHASE-RELATED"/>
    <property type="match status" value="1"/>
</dbReference>
<dbReference type="PANTHER" id="PTHR43322:SF5">
    <property type="entry name" value="1-DEOXY-D-XYLULOSE-5-PHOSPHATE SYNTHASE, CHLOROPLASTIC"/>
    <property type="match status" value="1"/>
</dbReference>
<dbReference type="Pfam" id="PF13292">
    <property type="entry name" value="DXP_synthase_N"/>
    <property type="match status" value="1"/>
</dbReference>
<dbReference type="Pfam" id="PF02779">
    <property type="entry name" value="Transket_pyr"/>
    <property type="match status" value="1"/>
</dbReference>
<dbReference type="Pfam" id="PF02780">
    <property type="entry name" value="Transketolase_C"/>
    <property type="match status" value="1"/>
</dbReference>
<dbReference type="SMART" id="SM00861">
    <property type="entry name" value="Transket_pyr"/>
    <property type="match status" value="1"/>
</dbReference>
<dbReference type="SUPFAM" id="SSF52518">
    <property type="entry name" value="Thiamin diphosphate-binding fold (THDP-binding)"/>
    <property type="match status" value="2"/>
</dbReference>
<dbReference type="SUPFAM" id="SSF52922">
    <property type="entry name" value="TK C-terminal domain-like"/>
    <property type="match status" value="1"/>
</dbReference>
<dbReference type="PROSITE" id="PS00802">
    <property type="entry name" value="TRANSKETOLASE_2"/>
    <property type="match status" value="1"/>
</dbReference>
<protein>
    <recommendedName>
        <fullName evidence="1">1-deoxy-D-xylulose-5-phosphate synthase</fullName>
        <ecNumber evidence="1">2.2.1.7</ecNumber>
    </recommendedName>
    <alternativeName>
        <fullName evidence="1">1-deoxyxylulose-5-phosphate synthase</fullName>
        <shortName evidence="1">DXP synthase</shortName>
        <shortName evidence="1">DXPS</shortName>
    </alternativeName>
</protein>
<gene>
    <name evidence="1" type="primary">dxs</name>
    <name type="ordered locus">ABAYE0381</name>
</gene>
<name>DXS_ACIBY</name>
<evidence type="ECO:0000255" key="1">
    <source>
        <dbReference type="HAMAP-Rule" id="MF_00315"/>
    </source>
</evidence>
<comment type="function">
    <text evidence="1">Catalyzes the acyloin condensation reaction between C atoms 2 and 3 of pyruvate and glyceraldehyde 3-phosphate to yield 1-deoxy-D-xylulose-5-phosphate (DXP).</text>
</comment>
<comment type="catalytic activity">
    <reaction evidence="1">
        <text>D-glyceraldehyde 3-phosphate + pyruvate + H(+) = 1-deoxy-D-xylulose 5-phosphate + CO2</text>
        <dbReference type="Rhea" id="RHEA:12605"/>
        <dbReference type="ChEBI" id="CHEBI:15361"/>
        <dbReference type="ChEBI" id="CHEBI:15378"/>
        <dbReference type="ChEBI" id="CHEBI:16526"/>
        <dbReference type="ChEBI" id="CHEBI:57792"/>
        <dbReference type="ChEBI" id="CHEBI:59776"/>
        <dbReference type="EC" id="2.2.1.7"/>
    </reaction>
</comment>
<comment type="cofactor">
    <cofactor evidence="1">
        <name>Mg(2+)</name>
        <dbReference type="ChEBI" id="CHEBI:18420"/>
    </cofactor>
    <text evidence="1">Binds 1 Mg(2+) ion per subunit.</text>
</comment>
<comment type="cofactor">
    <cofactor evidence="1">
        <name>thiamine diphosphate</name>
        <dbReference type="ChEBI" id="CHEBI:58937"/>
    </cofactor>
    <text evidence="1">Binds 1 thiamine pyrophosphate per subunit.</text>
</comment>
<comment type="pathway">
    <text evidence="1">Metabolic intermediate biosynthesis; 1-deoxy-D-xylulose 5-phosphate biosynthesis; 1-deoxy-D-xylulose 5-phosphate from D-glyceraldehyde 3-phosphate and pyruvate: step 1/1.</text>
</comment>
<comment type="subunit">
    <text evidence="1">Homodimer.</text>
</comment>
<comment type="similarity">
    <text evidence="1">Belongs to the transketolase family. DXPS subfamily.</text>
</comment>
<reference key="1">
    <citation type="journal article" date="2008" name="PLoS ONE">
        <title>Comparative analysis of Acinetobacters: three genomes for three lifestyles.</title>
        <authorList>
            <person name="Vallenet D."/>
            <person name="Nordmann P."/>
            <person name="Barbe V."/>
            <person name="Poirel L."/>
            <person name="Mangenot S."/>
            <person name="Bataille E."/>
            <person name="Dossat C."/>
            <person name="Gas S."/>
            <person name="Kreimeyer A."/>
            <person name="Lenoble P."/>
            <person name="Oztas S."/>
            <person name="Poulain J."/>
            <person name="Segurens B."/>
            <person name="Robert C."/>
            <person name="Abergel C."/>
            <person name="Claverie J.-M."/>
            <person name="Raoult D."/>
            <person name="Medigue C."/>
            <person name="Weissenbach J."/>
            <person name="Cruveiller S."/>
        </authorList>
    </citation>
    <scope>NUCLEOTIDE SEQUENCE [LARGE SCALE GENOMIC DNA]</scope>
    <source>
        <strain>AYE</strain>
    </source>
</reference>